<dbReference type="EC" id="2.2.1.9" evidence="1"/>
<dbReference type="EMBL" id="AE014613">
    <property type="protein sequence ID" value="AAO68260.1"/>
    <property type="molecule type" value="Genomic_DNA"/>
</dbReference>
<dbReference type="EMBL" id="AL513382">
    <property type="protein sequence ID" value="CAD07542.1"/>
    <property type="molecule type" value="Genomic_DNA"/>
</dbReference>
<dbReference type="RefSeq" id="NP_456852.1">
    <property type="nucleotide sequence ID" value="NC_003198.1"/>
</dbReference>
<dbReference type="RefSeq" id="WP_000116387.1">
    <property type="nucleotide sequence ID" value="NZ_WSUR01000039.1"/>
</dbReference>
<dbReference type="SMR" id="Q8Z533"/>
<dbReference type="STRING" id="220341.gene:17586439"/>
<dbReference type="KEGG" id="stt:t0554"/>
<dbReference type="KEGG" id="sty:STY2540"/>
<dbReference type="PATRIC" id="fig|220341.7.peg.2570"/>
<dbReference type="eggNOG" id="COG1165">
    <property type="taxonomic scope" value="Bacteria"/>
</dbReference>
<dbReference type="HOGENOM" id="CLU_006051_3_0_6"/>
<dbReference type="OMA" id="YDSNALW"/>
<dbReference type="OrthoDB" id="9791859at2"/>
<dbReference type="UniPathway" id="UPA00079"/>
<dbReference type="UniPathway" id="UPA01057">
    <property type="reaction ID" value="UER00164"/>
</dbReference>
<dbReference type="Proteomes" id="UP000000541">
    <property type="component" value="Chromosome"/>
</dbReference>
<dbReference type="Proteomes" id="UP000002670">
    <property type="component" value="Chromosome"/>
</dbReference>
<dbReference type="GO" id="GO:0070204">
    <property type="term" value="F:2-succinyl-5-enolpyruvyl-6-hydroxy-3-cyclohexene-1-carboxylic-acid synthase activity"/>
    <property type="evidence" value="ECO:0007669"/>
    <property type="project" value="UniProtKB-UniRule"/>
</dbReference>
<dbReference type="GO" id="GO:0000287">
    <property type="term" value="F:magnesium ion binding"/>
    <property type="evidence" value="ECO:0007669"/>
    <property type="project" value="UniProtKB-UniRule"/>
</dbReference>
<dbReference type="GO" id="GO:0030145">
    <property type="term" value="F:manganese ion binding"/>
    <property type="evidence" value="ECO:0007669"/>
    <property type="project" value="UniProtKB-UniRule"/>
</dbReference>
<dbReference type="GO" id="GO:0030976">
    <property type="term" value="F:thiamine pyrophosphate binding"/>
    <property type="evidence" value="ECO:0007669"/>
    <property type="project" value="UniProtKB-UniRule"/>
</dbReference>
<dbReference type="GO" id="GO:0009234">
    <property type="term" value="P:menaquinone biosynthetic process"/>
    <property type="evidence" value="ECO:0007669"/>
    <property type="project" value="UniProtKB-UniRule"/>
</dbReference>
<dbReference type="CDD" id="cd07037">
    <property type="entry name" value="TPP_PYR_MenD"/>
    <property type="match status" value="1"/>
</dbReference>
<dbReference type="CDD" id="cd02009">
    <property type="entry name" value="TPP_SHCHC_synthase"/>
    <property type="match status" value="1"/>
</dbReference>
<dbReference type="FunFam" id="3.40.50.970:FF:000029">
    <property type="entry name" value="2-succinyl-5-enolpyruvyl-6-hydroxy-3-cyclohexene-1-carboxylate synthase"/>
    <property type="match status" value="1"/>
</dbReference>
<dbReference type="Gene3D" id="3.40.50.970">
    <property type="match status" value="2"/>
</dbReference>
<dbReference type="Gene3D" id="3.40.50.1220">
    <property type="entry name" value="TPP-binding domain"/>
    <property type="match status" value="1"/>
</dbReference>
<dbReference type="HAMAP" id="MF_01659">
    <property type="entry name" value="MenD"/>
    <property type="match status" value="1"/>
</dbReference>
<dbReference type="InterPro" id="IPR004433">
    <property type="entry name" value="MenaQ_synth_MenD"/>
</dbReference>
<dbReference type="InterPro" id="IPR032264">
    <property type="entry name" value="MenD_middle"/>
</dbReference>
<dbReference type="InterPro" id="IPR029061">
    <property type="entry name" value="THDP-binding"/>
</dbReference>
<dbReference type="InterPro" id="IPR012001">
    <property type="entry name" value="Thiamin_PyroP_enz_TPP-bd_dom"/>
</dbReference>
<dbReference type="InterPro" id="IPR011766">
    <property type="entry name" value="TPP_enzyme_TPP-bd"/>
</dbReference>
<dbReference type="NCBIfam" id="TIGR00173">
    <property type="entry name" value="menD"/>
    <property type="match status" value="1"/>
</dbReference>
<dbReference type="PANTHER" id="PTHR42916">
    <property type="entry name" value="2-SUCCINYL-5-ENOLPYRUVYL-6-HYDROXY-3-CYCLOHEXENE-1-CARBOXYLATE SYNTHASE"/>
    <property type="match status" value="1"/>
</dbReference>
<dbReference type="PANTHER" id="PTHR42916:SF1">
    <property type="entry name" value="PROTEIN PHYLLO, CHLOROPLASTIC"/>
    <property type="match status" value="1"/>
</dbReference>
<dbReference type="Pfam" id="PF02775">
    <property type="entry name" value="TPP_enzyme_C"/>
    <property type="match status" value="1"/>
</dbReference>
<dbReference type="Pfam" id="PF16582">
    <property type="entry name" value="TPP_enzyme_M_2"/>
    <property type="match status" value="1"/>
</dbReference>
<dbReference type="Pfam" id="PF02776">
    <property type="entry name" value="TPP_enzyme_N"/>
    <property type="match status" value="1"/>
</dbReference>
<dbReference type="PIRSF" id="PIRSF004983">
    <property type="entry name" value="MenD"/>
    <property type="match status" value="1"/>
</dbReference>
<dbReference type="SUPFAM" id="SSF52518">
    <property type="entry name" value="Thiamin diphosphate-binding fold (THDP-binding)"/>
    <property type="match status" value="2"/>
</dbReference>
<protein>
    <recommendedName>
        <fullName evidence="1">2-succinyl-5-enolpyruvyl-6-hydroxy-3-cyclohexene-1-carboxylate synthase</fullName>
        <shortName evidence="1">SEPHCHC synthase</shortName>
        <ecNumber evidence="1">2.2.1.9</ecNumber>
    </recommendedName>
    <alternativeName>
        <fullName evidence="1">Menaquinone biosynthesis protein MenD</fullName>
    </alternativeName>
</protein>
<name>MEND_SALTI</name>
<feature type="chain" id="PRO_0000341824" description="2-succinyl-5-enolpyruvyl-6-hydroxy-3-cyclohexene-1-carboxylate synthase">
    <location>
        <begin position="1"/>
        <end position="556"/>
    </location>
</feature>
<proteinExistence type="inferred from homology"/>
<organism>
    <name type="scientific">Salmonella typhi</name>
    <dbReference type="NCBI Taxonomy" id="90370"/>
    <lineage>
        <taxon>Bacteria</taxon>
        <taxon>Pseudomonadati</taxon>
        <taxon>Pseudomonadota</taxon>
        <taxon>Gammaproteobacteria</taxon>
        <taxon>Enterobacterales</taxon>
        <taxon>Enterobacteriaceae</taxon>
        <taxon>Salmonella</taxon>
    </lineage>
</organism>
<keyword id="KW-0460">Magnesium</keyword>
<keyword id="KW-0464">Manganese</keyword>
<keyword id="KW-0474">Menaquinone biosynthesis</keyword>
<keyword id="KW-0479">Metal-binding</keyword>
<keyword id="KW-0786">Thiamine pyrophosphate</keyword>
<keyword id="KW-0808">Transferase</keyword>
<sequence>MSVSAFNRRWAAVILEALTRHGVRHVCIAPGSRSTPLTLAAAENPAFIHHTHFDERGLGHLALGLAKVSQQPVAVIVTSGTAVANLYPALIEAGLTGEKLILLTADRPPELIDCGANQAIRQAGMFASHPSQTLSLPRPTQDIPARWLVSTIDNALAMLHAGALHINCPFAEPLYGDMNDTGLVWQQRLGDWWQDEKPWLREARRLASDKQRDWFFWRQKRGVVVAGRMSAEEGKKVAQWAQTLGWPLIGDVLSQTGQPLPCADLWLGNAKAVTELQQAQIVVQLGSSLTGKRLLQWQATCVPEEYWVIDNIEGRLDPAHHRGRRLVAKIADWLELHPAEKRKPWCVEIPRLAELAWQRVVAQRDTFGEAQLAHRIRDYLPEQGQLFVGNSLVVRLIDALSQLPAGYPVYSNRGASGIDGLLSTAAGVQRASAKSTLAIVGDLSALYDLNALALLRQVSAPFVLIVVNNNGGQIFSLLPTPQSKRERFYLMPQNVHFDHAAAMFNLRYHRPENWEELESALAGAWRTPATTVIELVVNDTDGAQTLQQLLAQVSHL</sequence>
<gene>
    <name evidence="1" type="primary">menD</name>
    <name type="ordered locus">STY2540</name>
    <name type="ordered locus">t0554</name>
</gene>
<evidence type="ECO:0000255" key="1">
    <source>
        <dbReference type="HAMAP-Rule" id="MF_01659"/>
    </source>
</evidence>
<accession>Q8Z533</accession>
<accession>Q7CB89</accession>
<comment type="function">
    <text evidence="1">Catalyzes the thiamine diphosphate-dependent decarboxylation of 2-oxoglutarate and the subsequent addition of the resulting succinic semialdehyde-thiamine pyrophosphate anion to isochorismate to yield 2-succinyl-5-enolpyruvyl-6-hydroxy-3-cyclohexene-1-carboxylate (SEPHCHC).</text>
</comment>
<comment type="catalytic activity">
    <reaction evidence="1">
        <text>isochorismate + 2-oxoglutarate + H(+) = 5-enolpyruvoyl-6-hydroxy-2-succinyl-cyclohex-3-ene-1-carboxylate + CO2</text>
        <dbReference type="Rhea" id="RHEA:25593"/>
        <dbReference type="ChEBI" id="CHEBI:15378"/>
        <dbReference type="ChEBI" id="CHEBI:16526"/>
        <dbReference type="ChEBI" id="CHEBI:16810"/>
        <dbReference type="ChEBI" id="CHEBI:29780"/>
        <dbReference type="ChEBI" id="CHEBI:58818"/>
        <dbReference type="EC" id="2.2.1.9"/>
    </reaction>
</comment>
<comment type="cofactor">
    <cofactor evidence="1">
        <name>Mg(2+)</name>
        <dbReference type="ChEBI" id="CHEBI:18420"/>
    </cofactor>
    <cofactor evidence="1">
        <name>Mn(2+)</name>
        <dbReference type="ChEBI" id="CHEBI:29035"/>
    </cofactor>
</comment>
<comment type="cofactor">
    <cofactor evidence="1">
        <name>thiamine diphosphate</name>
        <dbReference type="ChEBI" id="CHEBI:58937"/>
    </cofactor>
    <text evidence="1">Binds 1 thiamine pyrophosphate per subunit.</text>
</comment>
<comment type="pathway">
    <text evidence="1">Quinol/quinone metabolism; 1,4-dihydroxy-2-naphthoate biosynthesis; 1,4-dihydroxy-2-naphthoate from chorismate: step 2/7.</text>
</comment>
<comment type="pathway">
    <text evidence="1">Quinol/quinone metabolism; menaquinone biosynthesis.</text>
</comment>
<comment type="subunit">
    <text evidence="1">Homodimer.</text>
</comment>
<comment type="similarity">
    <text evidence="1">Belongs to the TPP enzyme family. MenD subfamily.</text>
</comment>
<reference key="1">
    <citation type="journal article" date="2001" name="Nature">
        <title>Complete genome sequence of a multiple drug resistant Salmonella enterica serovar Typhi CT18.</title>
        <authorList>
            <person name="Parkhill J."/>
            <person name="Dougan G."/>
            <person name="James K.D."/>
            <person name="Thomson N.R."/>
            <person name="Pickard D."/>
            <person name="Wain J."/>
            <person name="Churcher C.M."/>
            <person name="Mungall K.L."/>
            <person name="Bentley S.D."/>
            <person name="Holden M.T.G."/>
            <person name="Sebaihia M."/>
            <person name="Baker S."/>
            <person name="Basham D."/>
            <person name="Brooks K."/>
            <person name="Chillingworth T."/>
            <person name="Connerton P."/>
            <person name="Cronin A."/>
            <person name="Davis P."/>
            <person name="Davies R.M."/>
            <person name="Dowd L."/>
            <person name="White N."/>
            <person name="Farrar J."/>
            <person name="Feltwell T."/>
            <person name="Hamlin N."/>
            <person name="Haque A."/>
            <person name="Hien T.T."/>
            <person name="Holroyd S."/>
            <person name="Jagels K."/>
            <person name="Krogh A."/>
            <person name="Larsen T.S."/>
            <person name="Leather S."/>
            <person name="Moule S."/>
            <person name="O'Gaora P."/>
            <person name="Parry C."/>
            <person name="Quail M.A."/>
            <person name="Rutherford K.M."/>
            <person name="Simmonds M."/>
            <person name="Skelton J."/>
            <person name="Stevens K."/>
            <person name="Whitehead S."/>
            <person name="Barrell B.G."/>
        </authorList>
    </citation>
    <scope>NUCLEOTIDE SEQUENCE [LARGE SCALE GENOMIC DNA]</scope>
    <source>
        <strain>CT18</strain>
    </source>
</reference>
<reference key="2">
    <citation type="journal article" date="2003" name="J. Bacteriol.">
        <title>Comparative genomics of Salmonella enterica serovar Typhi strains Ty2 and CT18.</title>
        <authorList>
            <person name="Deng W."/>
            <person name="Liou S.-R."/>
            <person name="Plunkett G. III"/>
            <person name="Mayhew G.F."/>
            <person name="Rose D.J."/>
            <person name="Burland V."/>
            <person name="Kodoyianni V."/>
            <person name="Schwartz D.C."/>
            <person name="Blattner F.R."/>
        </authorList>
    </citation>
    <scope>NUCLEOTIDE SEQUENCE [LARGE SCALE GENOMIC DNA]</scope>
    <source>
        <strain>ATCC 700931 / Ty2</strain>
    </source>
</reference>